<name>YQGF_BARBK</name>
<organism>
    <name type="scientific">Bartonella bacilliformis (strain ATCC 35685 / KC583 / Herrer 020/F12,63)</name>
    <dbReference type="NCBI Taxonomy" id="360095"/>
    <lineage>
        <taxon>Bacteria</taxon>
        <taxon>Pseudomonadati</taxon>
        <taxon>Pseudomonadota</taxon>
        <taxon>Alphaproteobacteria</taxon>
        <taxon>Hyphomicrobiales</taxon>
        <taxon>Bartonellaceae</taxon>
        <taxon>Bartonella</taxon>
    </lineage>
</organism>
<accession>A1UT22</accession>
<dbReference type="EC" id="3.1.-.-" evidence="1"/>
<dbReference type="EMBL" id="CP000524">
    <property type="protein sequence ID" value="ABM45498.1"/>
    <property type="molecule type" value="Genomic_DNA"/>
</dbReference>
<dbReference type="SMR" id="A1UT22"/>
<dbReference type="STRING" id="360095.BARBAKC583_0838"/>
<dbReference type="GeneID" id="4684412"/>
<dbReference type="KEGG" id="bbk:BARBAKC583_0838"/>
<dbReference type="PATRIC" id="fig|360095.6.peg.813"/>
<dbReference type="eggNOG" id="COG0816">
    <property type="taxonomic scope" value="Bacteria"/>
</dbReference>
<dbReference type="HOGENOM" id="CLU_098240_1_1_5"/>
<dbReference type="OrthoDB" id="9796140at2"/>
<dbReference type="Proteomes" id="UP000000643">
    <property type="component" value="Chromosome"/>
</dbReference>
<dbReference type="GO" id="GO:0005829">
    <property type="term" value="C:cytosol"/>
    <property type="evidence" value="ECO:0007669"/>
    <property type="project" value="TreeGrafter"/>
</dbReference>
<dbReference type="GO" id="GO:0004518">
    <property type="term" value="F:nuclease activity"/>
    <property type="evidence" value="ECO:0007669"/>
    <property type="project" value="UniProtKB-KW"/>
</dbReference>
<dbReference type="GO" id="GO:0000967">
    <property type="term" value="P:rRNA 5'-end processing"/>
    <property type="evidence" value="ECO:0007669"/>
    <property type="project" value="UniProtKB-UniRule"/>
</dbReference>
<dbReference type="CDD" id="cd16964">
    <property type="entry name" value="YqgF"/>
    <property type="match status" value="1"/>
</dbReference>
<dbReference type="Gene3D" id="3.30.420.140">
    <property type="entry name" value="YqgF/RNase H-like domain"/>
    <property type="match status" value="1"/>
</dbReference>
<dbReference type="HAMAP" id="MF_00651">
    <property type="entry name" value="Nuclease_YqgF"/>
    <property type="match status" value="1"/>
</dbReference>
<dbReference type="InterPro" id="IPR012337">
    <property type="entry name" value="RNaseH-like_sf"/>
</dbReference>
<dbReference type="InterPro" id="IPR005227">
    <property type="entry name" value="YqgF"/>
</dbReference>
<dbReference type="InterPro" id="IPR006641">
    <property type="entry name" value="YqgF/RNaseH-like_dom"/>
</dbReference>
<dbReference type="InterPro" id="IPR037027">
    <property type="entry name" value="YqgF/RNaseH-like_dom_sf"/>
</dbReference>
<dbReference type="NCBIfam" id="TIGR00250">
    <property type="entry name" value="RNAse_H_YqgF"/>
    <property type="match status" value="1"/>
</dbReference>
<dbReference type="PANTHER" id="PTHR33317">
    <property type="entry name" value="POLYNUCLEOTIDYL TRANSFERASE, RIBONUCLEASE H-LIKE SUPERFAMILY PROTEIN"/>
    <property type="match status" value="1"/>
</dbReference>
<dbReference type="PANTHER" id="PTHR33317:SF4">
    <property type="entry name" value="POLYNUCLEOTIDYL TRANSFERASE, RIBONUCLEASE H-LIKE SUPERFAMILY PROTEIN"/>
    <property type="match status" value="1"/>
</dbReference>
<dbReference type="Pfam" id="PF03652">
    <property type="entry name" value="RuvX"/>
    <property type="match status" value="1"/>
</dbReference>
<dbReference type="SMART" id="SM00732">
    <property type="entry name" value="YqgFc"/>
    <property type="match status" value="1"/>
</dbReference>
<dbReference type="SUPFAM" id="SSF53098">
    <property type="entry name" value="Ribonuclease H-like"/>
    <property type="match status" value="1"/>
</dbReference>
<keyword id="KW-0963">Cytoplasm</keyword>
<keyword id="KW-0378">Hydrolase</keyword>
<keyword id="KW-0540">Nuclease</keyword>
<keyword id="KW-0690">Ribosome biogenesis</keyword>
<reference key="1">
    <citation type="submission" date="2006-12" db="EMBL/GenBank/DDBJ databases">
        <authorList>
            <person name="Hendrix L."/>
            <person name="Mohamoud Y."/>
            <person name="Radune D."/>
            <person name="Shvartsbeyn A."/>
            <person name="Daugherty S."/>
            <person name="Dodson R."/>
            <person name="Durkin A.S."/>
            <person name="Harkins D."/>
            <person name="Huot H."/>
            <person name="Kothari S.P."/>
            <person name="Madupu R."/>
            <person name="Li J."/>
            <person name="Nelson W.C."/>
            <person name="Shrivastava S."/>
            <person name="Giglio M.G."/>
            <person name="Haft D."/>
            <person name="Selengut J."/>
            <person name="Fraser-Ligget C."/>
            <person name="Seshadri R."/>
        </authorList>
    </citation>
    <scope>NUCLEOTIDE SEQUENCE [LARGE SCALE GENOMIC DNA]</scope>
    <source>
        <strain>ATCC 35685 / KC583 / Herrer 020/F12,63</strain>
    </source>
</reference>
<evidence type="ECO:0000255" key="1">
    <source>
        <dbReference type="HAMAP-Rule" id="MF_00651"/>
    </source>
</evidence>
<protein>
    <recommendedName>
        <fullName evidence="1">Putative pre-16S rRNA nuclease</fullName>
        <ecNumber evidence="1">3.1.-.-</ecNumber>
    </recommendedName>
</protein>
<feature type="chain" id="PRO_1000061486" description="Putative pre-16S rRNA nuclease">
    <location>
        <begin position="1"/>
        <end position="161"/>
    </location>
</feature>
<proteinExistence type="inferred from homology"/>
<gene>
    <name type="ordered locus">BARBAKC583_0838</name>
</gene>
<comment type="function">
    <text evidence="1">Could be a nuclease involved in processing of the 5'-end of pre-16S rRNA.</text>
</comment>
<comment type="subcellular location">
    <subcellularLocation>
        <location evidence="1">Cytoplasm</location>
    </subcellularLocation>
</comment>
<comment type="similarity">
    <text evidence="1">Belongs to the YqgF nuclease family.</text>
</comment>
<sequence length="161" mass="17929">MAIITIDRVISHLLSKQTIAGLDLGTKTIGIAISDISLTFSNPRPVIQRKKFTLDALKLIKIFDHENVGVAIIGLPINMDGSNGPRVQATRTFVSNIAMYTKIPFIFWDERLSTIAAQRHLLEIDVSRIKRENRIDSAAAAFILQGALDRIQILRQNHTEG</sequence>